<protein>
    <recommendedName>
        <fullName evidence="1">Putative antitoxin VapB45</fullName>
    </recommendedName>
</protein>
<name>VPB45_MYCTU</name>
<comment type="function">
    <text evidence="2">Possibly the antitoxin component of a type II toxin-antitoxin (TA) system. Its cognate toxin is VapC45.</text>
</comment>
<proteinExistence type="evidence at protein level"/>
<feature type="chain" id="PRO_0000433058" description="Putative antitoxin VapB45">
    <location>
        <begin position="1"/>
        <end position="239"/>
    </location>
</feature>
<feature type="strand" evidence="3">
    <location>
        <begin position="11"/>
        <end position="13"/>
    </location>
</feature>
<feature type="helix" evidence="3">
    <location>
        <begin position="18"/>
        <end position="25"/>
    </location>
</feature>
<feature type="helix" evidence="3">
    <location>
        <begin position="29"/>
        <end position="36"/>
    </location>
</feature>
<feature type="strand" evidence="3">
    <location>
        <begin position="66"/>
        <end position="68"/>
    </location>
</feature>
<feature type="helix" evidence="3">
    <location>
        <begin position="70"/>
        <end position="84"/>
    </location>
</feature>
<feature type="helix" evidence="3">
    <location>
        <begin position="93"/>
        <end position="103"/>
    </location>
</feature>
<feature type="helix" evidence="3">
    <location>
        <begin position="107"/>
        <end position="109"/>
    </location>
</feature>
<feature type="helix" evidence="3">
    <location>
        <begin position="113"/>
        <end position="128"/>
    </location>
</feature>
<feature type="helix" evidence="3">
    <location>
        <begin position="133"/>
        <end position="141"/>
    </location>
</feature>
<feature type="strand" evidence="3">
    <location>
        <begin position="142"/>
        <end position="145"/>
    </location>
</feature>
<feature type="strand" evidence="3">
    <location>
        <begin position="148"/>
        <end position="151"/>
    </location>
</feature>
<feature type="helix" evidence="3">
    <location>
        <begin position="153"/>
        <end position="159"/>
    </location>
</feature>
<feature type="strand" evidence="3">
    <location>
        <begin position="162"/>
        <end position="164"/>
    </location>
</feature>
<feature type="strand" evidence="3">
    <location>
        <begin position="168"/>
        <end position="174"/>
    </location>
</feature>
<feature type="helix" evidence="3">
    <location>
        <begin position="176"/>
        <end position="181"/>
    </location>
</feature>
<feature type="strand" evidence="3">
    <location>
        <begin position="183"/>
        <end position="185"/>
    </location>
</feature>
<feature type="helix" evidence="3">
    <location>
        <begin position="190"/>
        <end position="192"/>
    </location>
</feature>
<feature type="turn" evidence="3">
    <location>
        <begin position="197"/>
        <end position="199"/>
    </location>
</feature>
<feature type="helix" evidence="3">
    <location>
        <begin position="204"/>
        <end position="211"/>
    </location>
</feature>
<feature type="helix" evidence="3">
    <location>
        <begin position="216"/>
        <end position="223"/>
    </location>
</feature>
<feature type="helix" evidence="3">
    <location>
        <begin position="227"/>
        <end position="234"/>
    </location>
</feature>
<sequence length="239" mass="26034">MAGDQELELRFDVPLYTLAEASRYLVVPRATLATWADGYERRPANAPAVQGQPIITALPHPTGSHARLPFVGIAEAYVLNAFRRAGVPMQRIRPSLDWLIKNVGPHALASQDLCTDGAEVLWRFAERSGEGSPDDLVVRGLIVPRSGQYVFKEIVEHYLQQISFADDNLASMIRLPQYGDANVVLDPRRGYGQPVFDGSGVRVADVLGPLRAGATFQAVADDYGVTPDQLRDALDAIAA</sequence>
<gene>
    <name evidence="1" type="primary">vapB45</name>
    <name type="ordered locus">Rv2018</name>
    <name type="ordered locus">RVBD_2018</name>
    <name type="ORF">P425_02089</name>
</gene>
<evidence type="ECO:0000303" key="1">
    <source>
    </source>
</evidence>
<evidence type="ECO:0000305" key="2">
    <source>
    </source>
</evidence>
<evidence type="ECO:0007829" key="3">
    <source>
        <dbReference type="PDB" id="5AF3"/>
    </source>
</evidence>
<reference key="1">
    <citation type="journal article" date="1998" name="Nature">
        <title>Deciphering the biology of Mycobacterium tuberculosis from the complete genome sequence.</title>
        <authorList>
            <person name="Cole S.T."/>
            <person name="Brosch R."/>
            <person name="Parkhill J."/>
            <person name="Garnier T."/>
            <person name="Churcher C.M."/>
            <person name="Harris D.E."/>
            <person name="Gordon S.V."/>
            <person name="Eiglmeier K."/>
            <person name="Gas S."/>
            <person name="Barry C.E. III"/>
            <person name="Tekaia F."/>
            <person name="Badcock K."/>
            <person name="Basham D."/>
            <person name="Brown D."/>
            <person name="Chillingworth T."/>
            <person name="Connor R."/>
            <person name="Davies R.M."/>
            <person name="Devlin K."/>
            <person name="Feltwell T."/>
            <person name="Gentles S."/>
            <person name="Hamlin N."/>
            <person name="Holroyd S."/>
            <person name="Hornsby T."/>
            <person name="Jagels K."/>
            <person name="Krogh A."/>
            <person name="McLean J."/>
            <person name="Moule S."/>
            <person name="Murphy L.D."/>
            <person name="Oliver S."/>
            <person name="Osborne J."/>
            <person name="Quail M.A."/>
            <person name="Rajandream M.A."/>
            <person name="Rogers J."/>
            <person name="Rutter S."/>
            <person name="Seeger K."/>
            <person name="Skelton S."/>
            <person name="Squares S."/>
            <person name="Squares R."/>
            <person name="Sulston J.E."/>
            <person name="Taylor K."/>
            <person name="Whitehead S."/>
            <person name="Barrell B.G."/>
        </authorList>
    </citation>
    <scope>NUCLEOTIDE SEQUENCE [LARGE SCALE GENOMIC DNA]</scope>
    <source>
        <strain>ATCC 25618 / H37Rv</strain>
    </source>
</reference>
<reference key="2">
    <citation type="submission" date="2013-11" db="EMBL/GenBank/DDBJ databases">
        <title>The genome sequence of Mycobacterium tuberculosis H37Rv.</title>
        <authorList>
            <consortium name="The Broad Institute Genome Sequencing Platform"/>
            <person name="Galagan J."/>
            <person name="Kreiswirth B."/>
            <person name="Dobos K."/>
            <person name="Fortune S."/>
            <person name="Fitzgerald M."/>
            <person name="Young S.K."/>
            <person name="Zeng Q."/>
            <person name="Gargeya S."/>
            <person name="Abouelleil A."/>
            <person name="Alvarado L."/>
            <person name="Berlin A.M."/>
            <person name="Chapman S.B."/>
            <person name="Gainer-Dewar J."/>
            <person name="Goldberg J."/>
            <person name="Gnerre S."/>
            <person name="Griggs A."/>
            <person name="Gujja S."/>
            <person name="Hansen M."/>
            <person name="Howarth C."/>
            <person name="Imamovic A."/>
            <person name="Larimer J."/>
            <person name="McCowan C."/>
            <person name="Murphy C."/>
            <person name="Pearson M."/>
            <person name="Poon T."/>
            <person name="Priest M."/>
            <person name="Roberts A."/>
            <person name="Saif S."/>
            <person name="Shea T."/>
            <person name="Sykes S."/>
            <person name="Wortman J."/>
            <person name="Nusbaum C."/>
            <person name="Birren B."/>
        </authorList>
    </citation>
    <scope>NUCLEOTIDE SEQUENCE [LARGE SCALE GENOMIC DNA]</scope>
    <source>
        <strain>ATCC 25618 / H37Rv</strain>
    </source>
</reference>
<reference key="3">
    <citation type="submission" date="2014-04" db="EMBL/GenBank/DDBJ databases">
        <title>The genome sequence of Mycobacterium tuberculosis H37Rv.</title>
        <authorList>
            <consortium name="The Broad Institute Genomics Platform"/>
            <consortium name="The Broad Institute Genome Sequencing Center for Infectious Disease"/>
            <person name="Earl A.M."/>
            <person name="Kreiswirth B."/>
            <person name="Gomez J."/>
            <person name="Victor T."/>
            <person name="Desjardins C."/>
            <person name="Abeel T."/>
            <person name="Young S."/>
            <person name="Zeng Q."/>
            <person name="Gargeya S."/>
            <person name="Abouelleil A."/>
            <person name="Alvarado L."/>
            <person name="Chapman S.B."/>
            <person name="Gainer-Dewar J."/>
            <person name="Goldberg J."/>
            <person name="Griggs A."/>
            <person name="Gujja S."/>
            <person name="Hansen M."/>
            <person name="Howarth C."/>
            <person name="Imamovic A."/>
            <person name="Larimer J."/>
            <person name="Murphy C."/>
            <person name="Naylor J."/>
            <person name="Pearson M."/>
            <person name="Poon T.W."/>
            <person name="Priest M."/>
            <person name="Roberts A."/>
            <person name="Saif S."/>
            <person name="Shea T."/>
            <person name="Sykes S."/>
            <person name="Wortman J."/>
            <person name="Nusbaum C."/>
            <person name="Birren B."/>
        </authorList>
    </citation>
    <scope>NUCLEOTIDE SEQUENCE [LARGE SCALE GENOMIC DNA]</scope>
    <source>
        <strain>ATCC 25618 / H37Rv</strain>
    </source>
</reference>
<reference key="4">
    <citation type="journal article" date="2011" name="Mol. Cell. Proteomics">
        <title>Proteogenomic analysis of Mycobacterium tuberculosis by high resolution mass spectrometry.</title>
        <authorList>
            <person name="Kelkar D.S."/>
            <person name="Kumar D."/>
            <person name="Kumar P."/>
            <person name="Balakrishnan L."/>
            <person name="Muthusamy B."/>
            <person name="Yadav A.K."/>
            <person name="Shrivastava P."/>
            <person name="Marimuthu A."/>
            <person name="Anand S."/>
            <person name="Sundaram H."/>
            <person name="Kingsbury R."/>
            <person name="Harsha H.C."/>
            <person name="Nair B."/>
            <person name="Prasad T.S."/>
            <person name="Chauhan D.S."/>
            <person name="Katoch K."/>
            <person name="Katoch V.M."/>
            <person name="Kumar P."/>
            <person name="Chaerkady R."/>
            <person name="Ramachandran S."/>
            <person name="Dash D."/>
            <person name="Pandey A."/>
        </authorList>
    </citation>
    <scope>IDENTIFICATION BY MASS SPECTROMETRY [LARGE SCALE ANALYSIS]</scope>
    <source>
        <strain>ATCC 25618 / H37Rv</strain>
    </source>
</reference>
<reference key="5">
    <citation type="journal article" date="2014" name="Toxins">
        <title>Multiple toxin-antitoxin systems in Mycobacterium tuberculosis.</title>
        <authorList>
            <person name="Sala A."/>
            <person name="Bordes P."/>
            <person name="Genevaux P."/>
        </authorList>
    </citation>
    <scope>GENE NAME</scope>
    <scope>DISCUSSION OF FUNCTION</scope>
    <scope>REVIEW</scope>
    <source>
        <strain>ATCC 25618 / H37Rv</strain>
    </source>
</reference>
<keyword id="KW-0002">3D-structure</keyword>
<keyword id="KW-1185">Reference proteome</keyword>
<keyword id="KW-1277">Toxin-antitoxin system</keyword>
<dbReference type="EMBL" id="CP003248">
    <property type="protein sequence ID" value="AFN49958.1"/>
    <property type="molecule type" value="Genomic_DNA"/>
</dbReference>
<dbReference type="EMBL" id="AL123456">
    <property type="protein sequence ID" value="CCP44790.1"/>
    <property type="molecule type" value="Genomic_DNA"/>
</dbReference>
<dbReference type="EMBL" id="JLDD01000023">
    <property type="protein sequence ID" value="KBJ33162.1"/>
    <property type="molecule type" value="Genomic_DNA"/>
</dbReference>
<dbReference type="RefSeq" id="NP_216534.1">
    <property type="nucleotide sequence ID" value="NC_000962.3"/>
</dbReference>
<dbReference type="RefSeq" id="WP_003410108.1">
    <property type="nucleotide sequence ID" value="NZ_NVQJ01000046.1"/>
</dbReference>
<dbReference type="PDB" id="5AF3">
    <property type="method" value="X-ray"/>
    <property type="resolution" value="1.78 A"/>
    <property type="chains" value="A/B=1-239"/>
</dbReference>
<dbReference type="PDBsum" id="5AF3"/>
<dbReference type="SMR" id="O53464"/>
<dbReference type="STRING" id="83332.Rv2018"/>
<dbReference type="PaxDb" id="83332-Rv2018"/>
<dbReference type="DNASU" id="887560"/>
<dbReference type="GeneID" id="887560"/>
<dbReference type="KEGG" id="mtu:Rv2018"/>
<dbReference type="KEGG" id="mtv:RVBD_2018"/>
<dbReference type="PATRIC" id="fig|83332.111.peg.2249"/>
<dbReference type="TubercuList" id="Rv2018"/>
<dbReference type="eggNOG" id="COG2442">
    <property type="taxonomic scope" value="Bacteria"/>
</dbReference>
<dbReference type="HOGENOM" id="CLU_092327_0_0_11"/>
<dbReference type="InParanoid" id="O53464"/>
<dbReference type="OrthoDB" id="5140481at2"/>
<dbReference type="PhylomeDB" id="O53464"/>
<dbReference type="Proteomes" id="UP000001584">
    <property type="component" value="Chromosome"/>
</dbReference>
<dbReference type="Gene3D" id="1.10.10.10">
    <property type="entry name" value="Winged helix-like DNA-binding domain superfamily/Winged helix DNA-binding domain"/>
    <property type="match status" value="1"/>
</dbReference>
<dbReference type="InterPro" id="IPR007367">
    <property type="entry name" value="DUF433"/>
</dbReference>
<dbReference type="InterPro" id="IPR009057">
    <property type="entry name" value="Homeodomain-like_sf"/>
</dbReference>
<dbReference type="InterPro" id="IPR017277">
    <property type="entry name" value="VapB45-like"/>
</dbReference>
<dbReference type="InterPro" id="IPR048708">
    <property type="entry name" value="VapB45-like_HTH"/>
</dbReference>
<dbReference type="InterPro" id="IPR036388">
    <property type="entry name" value="WH-like_DNA-bd_sf"/>
</dbReference>
<dbReference type="Pfam" id="PF04255">
    <property type="entry name" value="DUF433"/>
    <property type="match status" value="1"/>
</dbReference>
<dbReference type="Pfam" id="PF21321">
    <property type="entry name" value="HTH_66"/>
    <property type="match status" value="1"/>
</dbReference>
<dbReference type="PIRSF" id="PIRSF037738">
    <property type="entry name" value="UCP037738"/>
    <property type="match status" value="1"/>
</dbReference>
<dbReference type="SUPFAM" id="SSF46689">
    <property type="entry name" value="Homeodomain-like"/>
    <property type="match status" value="1"/>
</dbReference>
<accession>O53464</accession>
<accession>I6XZK1</accession>
<accession>L0TB40</accession>
<organism>
    <name type="scientific">Mycobacterium tuberculosis (strain ATCC 25618 / H37Rv)</name>
    <dbReference type="NCBI Taxonomy" id="83332"/>
    <lineage>
        <taxon>Bacteria</taxon>
        <taxon>Bacillati</taxon>
        <taxon>Actinomycetota</taxon>
        <taxon>Actinomycetes</taxon>
        <taxon>Mycobacteriales</taxon>
        <taxon>Mycobacteriaceae</taxon>
        <taxon>Mycobacterium</taxon>
        <taxon>Mycobacterium tuberculosis complex</taxon>
    </lineage>
</organism>